<dbReference type="EC" id="3.6.5.n1" evidence="1"/>
<dbReference type="EMBL" id="CP001635">
    <property type="protein sequence ID" value="ACS18050.1"/>
    <property type="molecule type" value="Genomic_DNA"/>
</dbReference>
<dbReference type="SMR" id="C5CSF2"/>
<dbReference type="STRING" id="543728.Vapar_1399"/>
<dbReference type="KEGG" id="vap:Vapar_1399"/>
<dbReference type="eggNOG" id="COG0481">
    <property type="taxonomic scope" value="Bacteria"/>
</dbReference>
<dbReference type="HOGENOM" id="CLU_009995_3_3_4"/>
<dbReference type="OrthoDB" id="9801472at2"/>
<dbReference type="GO" id="GO:0005886">
    <property type="term" value="C:plasma membrane"/>
    <property type="evidence" value="ECO:0007669"/>
    <property type="project" value="UniProtKB-SubCell"/>
</dbReference>
<dbReference type="GO" id="GO:0005525">
    <property type="term" value="F:GTP binding"/>
    <property type="evidence" value="ECO:0007669"/>
    <property type="project" value="UniProtKB-UniRule"/>
</dbReference>
<dbReference type="GO" id="GO:0003924">
    <property type="term" value="F:GTPase activity"/>
    <property type="evidence" value="ECO:0007669"/>
    <property type="project" value="UniProtKB-UniRule"/>
</dbReference>
<dbReference type="GO" id="GO:0097216">
    <property type="term" value="F:guanosine tetraphosphate binding"/>
    <property type="evidence" value="ECO:0007669"/>
    <property type="project" value="UniProtKB-ARBA"/>
</dbReference>
<dbReference type="GO" id="GO:0043022">
    <property type="term" value="F:ribosome binding"/>
    <property type="evidence" value="ECO:0007669"/>
    <property type="project" value="UniProtKB-UniRule"/>
</dbReference>
<dbReference type="GO" id="GO:0003746">
    <property type="term" value="F:translation elongation factor activity"/>
    <property type="evidence" value="ECO:0007669"/>
    <property type="project" value="UniProtKB-UniRule"/>
</dbReference>
<dbReference type="GO" id="GO:0045727">
    <property type="term" value="P:positive regulation of translation"/>
    <property type="evidence" value="ECO:0007669"/>
    <property type="project" value="UniProtKB-UniRule"/>
</dbReference>
<dbReference type="CDD" id="cd16260">
    <property type="entry name" value="EF4_III"/>
    <property type="match status" value="1"/>
</dbReference>
<dbReference type="CDD" id="cd01890">
    <property type="entry name" value="LepA"/>
    <property type="match status" value="1"/>
</dbReference>
<dbReference type="CDD" id="cd03709">
    <property type="entry name" value="lepA_C"/>
    <property type="match status" value="1"/>
</dbReference>
<dbReference type="FunFam" id="3.40.50.300:FF:000078">
    <property type="entry name" value="Elongation factor 4"/>
    <property type="match status" value="1"/>
</dbReference>
<dbReference type="FunFam" id="2.40.30.10:FF:000015">
    <property type="entry name" value="Translation factor GUF1, mitochondrial"/>
    <property type="match status" value="1"/>
</dbReference>
<dbReference type="FunFam" id="3.30.70.240:FF:000007">
    <property type="entry name" value="Translation factor GUF1, mitochondrial"/>
    <property type="match status" value="1"/>
</dbReference>
<dbReference type="FunFam" id="3.30.70.2570:FF:000001">
    <property type="entry name" value="Translation factor GUF1, mitochondrial"/>
    <property type="match status" value="1"/>
</dbReference>
<dbReference type="FunFam" id="3.30.70.870:FF:000004">
    <property type="entry name" value="Translation factor GUF1, mitochondrial"/>
    <property type="match status" value="1"/>
</dbReference>
<dbReference type="Gene3D" id="3.30.70.240">
    <property type="match status" value="1"/>
</dbReference>
<dbReference type="Gene3D" id="3.30.70.2570">
    <property type="entry name" value="Elongation factor 4, C-terminal domain"/>
    <property type="match status" value="1"/>
</dbReference>
<dbReference type="Gene3D" id="3.30.70.870">
    <property type="entry name" value="Elongation Factor G (Translational Gtpase), domain 3"/>
    <property type="match status" value="1"/>
</dbReference>
<dbReference type="Gene3D" id="3.40.50.300">
    <property type="entry name" value="P-loop containing nucleotide triphosphate hydrolases"/>
    <property type="match status" value="1"/>
</dbReference>
<dbReference type="Gene3D" id="2.40.30.10">
    <property type="entry name" value="Translation factors"/>
    <property type="match status" value="1"/>
</dbReference>
<dbReference type="HAMAP" id="MF_00071">
    <property type="entry name" value="LepA"/>
    <property type="match status" value="1"/>
</dbReference>
<dbReference type="InterPro" id="IPR006297">
    <property type="entry name" value="EF-4"/>
</dbReference>
<dbReference type="InterPro" id="IPR035647">
    <property type="entry name" value="EFG_III/V"/>
</dbReference>
<dbReference type="InterPro" id="IPR000640">
    <property type="entry name" value="EFG_V-like"/>
</dbReference>
<dbReference type="InterPro" id="IPR004161">
    <property type="entry name" value="EFTu-like_2"/>
</dbReference>
<dbReference type="InterPro" id="IPR031157">
    <property type="entry name" value="G_TR_CS"/>
</dbReference>
<dbReference type="InterPro" id="IPR038363">
    <property type="entry name" value="LepA_C_sf"/>
</dbReference>
<dbReference type="InterPro" id="IPR013842">
    <property type="entry name" value="LepA_CTD"/>
</dbReference>
<dbReference type="InterPro" id="IPR035654">
    <property type="entry name" value="LepA_IV"/>
</dbReference>
<dbReference type="InterPro" id="IPR027417">
    <property type="entry name" value="P-loop_NTPase"/>
</dbReference>
<dbReference type="InterPro" id="IPR005225">
    <property type="entry name" value="Small_GTP-bd"/>
</dbReference>
<dbReference type="InterPro" id="IPR000795">
    <property type="entry name" value="T_Tr_GTP-bd_dom"/>
</dbReference>
<dbReference type="InterPro" id="IPR009000">
    <property type="entry name" value="Transl_B-barrel_sf"/>
</dbReference>
<dbReference type="NCBIfam" id="TIGR01393">
    <property type="entry name" value="lepA"/>
    <property type="match status" value="1"/>
</dbReference>
<dbReference type="NCBIfam" id="TIGR00231">
    <property type="entry name" value="small_GTP"/>
    <property type="match status" value="1"/>
</dbReference>
<dbReference type="PANTHER" id="PTHR43512:SF4">
    <property type="entry name" value="TRANSLATION FACTOR GUF1 HOMOLOG, CHLOROPLASTIC"/>
    <property type="match status" value="1"/>
</dbReference>
<dbReference type="PANTHER" id="PTHR43512">
    <property type="entry name" value="TRANSLATION FACTOR GUF1-RELATED"/>
    <property type="match status" value="1"/>
</dbReference>
<dbReference type="Pfam" id="PF00679">
    <property type="entry name" value="EFG_C"/>
    <property type="match status" value="1"/>
</dbReference>
<dbReference type="Pfam" id="PF00009">
    <property type="entry name" value="GTP_EFTU"/>
    <property type="match status" value="1"/>
</dbReference>
<dbReference type="Pfam" id="PF03144">
    <property type="entry name" value="GTP_EFTU_D2"/>
    <property type="match status" value="1"/>
</dbReference>
<dbReference type="Pfam" id="PF06421">
    <property type="entry name" value="LepA_C"/>
    <property type="match status" value="1"/>
</dbReference>
<dbReference type="PRINTS" id="PR00315">
    <property type="entry name" value="ELONGATNFCT"/>
</dbReference>
<dbReference type="SMART" id="SM00838">
    <property type="entry name" value="EFG_C"/>
    <property type="match status" value="1"/>
</dbReference>
<dbReference type="SUPFAM" id="SSF54980">
    <property type="entry name" value="EF-G C-terminal domain-like"/>
    <property type="match status" value="2"/>
</dbReference>
<dbReference type="SUPFAM" id="SSF52540">
    <property type="entry name" value="P-loop containing nucleoside triphosphate hydrolases"/>
    <property type="match status" value="1"/>
</dbReference>
<dbReference type="SUPFAM" id="SSF50447">
    <property type="entry name" value="Translation proteins"/>
    <property type="match status" value="1"/>
</dbReference>
<dbReference type="PROSITE" id="PS00301">
    <property type="entry name" value="G_TR_1"/>
    <property type="match status" value="1"/>
</dbReference>
<dbReference type="PROSITE" id="PS51722">
    <property type="entry name" value="G_TR_2"/>
    <property type="match status" value="1"/>
</dbReference>
<accession>C5CSF2</accession>
<reference key="1">
    <citation type="journal article" date="2011" name="J. Bacteriol.">
        <title>Complete genome sequence of the metabolically versatile plant growth-promoting endophyte, Variovorax paradoxus S110.</title>
        <authorList>
            <person name="Han J.I."/>
            <person name="Choi H.K."/>
            <person name="Lee S.W."/>
            <person name="Orwin P.M."/>
            <person name="Kim J."/>
            <person name="Laroe S.L."/>
            <person name="Kim T.G."/>
            <person name="O'Neil J."/>
            <person name="Leadbetter J.R."/>
            <person name="Lee S.Y."/>
            <person name="Hur C.G."/>
            <person name="Spain J.C."/>
            <person name="Ovchinnikova G."/>
            <person name="Goodwin L."/>
            <person name="Han C."/>
        </authorList>
    </citation>
    <scope>NUCLEOTIDE SEQUENCE [LARGE SCALE GENOMIC DNA]</scope>
    <source>
        <strain>S110</strain>
    </source>
</reference>
<sequence length="603" mass="66341">MNHIRNFSIIAHIDHGKSTLADRLIQRCGGLAEREMEAQVLDSMDIEKERGITIKAQTAALHYKALDGQVYNLNLIDTPGHVDFSYEVSRSLSACEGALLVVDASQGVEAQTVANCYTALDLGVEVVPVLNKMDLPNADPDNARSEIEDVIGIDATDAIPCSAKTGLGIDEILEAIVHKMPAPRGNPDGPLRAMIVDSWFDPYVGVVMLVRVVDGRLVKGERIKMMASGAMYNADNIGVFTPANEPRASLEAGEVGYIIAGIKELQAAKVGDTVTLIKPGTGGAAATATEALPGFKEIQPQVFAGLYPTEASEYDSLRDALEKLKLNDSSLRYEPEVSQALGFGFRCGFLGLLHMEIVQERLEREFDQDLITTAPSVVYQVVRNDGEVIMVENPSKMPDVGKMSEIREPIVTVHLYMPQEYVGAVMTLANQKRGVQMNMAYHGRQVMLTYEMPLGEIVLDFFDKLKSVSRGYASMDYEFKEYRASDVVKVDILLNGEKVDALSIIVHRSQSQYRGRAVVSKMREIISRQMFDVAIQAAIGVNIIARETIKALRKNVLAKCYGGDITRKKKLLEKQKAGKKRMKQIGSVEVPQEAFLAILQVED</sequence>
<gene>
    <name evidence="1" type="primary">lepA</name>
    <name type="ordered locus">Vapar_1399</name>
</gene>
<feature type="chain" id="PRO_1000202463" description="Elongation factor 4">
    <location>
        <begin position="1"/>
        <end position="603"/>
    </location>
</feature>
<feature type="domain" description="tr-type G">
    <location>
        <begin position="2"/>
        <end position="184"/>
    </location>
</feature>
<feature type="binding site" evidence="1">
    <location>
        <begin position="14"/>
        <end position="19"/>
    </location>
    <ligand>
        <name>GTP</name>
        <dbReference type="ChEBI" id="CHEBI:37565"/>
    </ligand>
</feature>
<feature type="binding site" evidence="1">
    <location>
        <begin position="131"/>
        <end position="134"/>
    </location>
    <ligand>
        <name>GTP</name>
        <dbReference type="ChEBI" id="CHEBI:37565"/>
    </ligand>
</feature>
<evidence type="ECO:0000255" key="1">
    <source>
        <dbReference type="HAMAP-Rule" id="MF_00071"/>
    </source>
</evidence>
<organism>
    <name type="scientific">Variovorax paradoxus (strain S110)</name>
    <dbReference type="NCBI Taxonomy" id="543728"/>
    <lineage>
        <taxon>Bacteria</taxon>
        <taxon>Pseudomonadati</taxon>
        <taxon>Pseudomonadota</taxon>
        <taxon>Betaproteobacteria</taxon>
        <taxon>Burkholderiales</taxon>
        <taxon>Comamonadaceae</taxon>
        <taxon>Variovorax</taxon>
    </lineage>
</organism>
<name>LEPA_VARPS</name>
<comment type="function">
    <text evidence="1">Required for accurate and efficient protein synthesis under certain stress conditions. May act as a fidelity factor of the translation reaction, by catalyzing a one-codon backward translocation of tRNAs on improperly translocated ribosomes. Back-translocation proceeds from a post-translocation (POST) complex to a pre-translocation (PRE) complex, thus giving elongation factor G a second chance to translocate the tRNAs correctly. Binds to ribosomes in a GTP-dependent manner.</text>
</comment>
<comment type="catalytic activity">
    <reaction evidence="1">
        <text>GTP + H2O = GDP + phosphate + H(+)</text>
        <dbReference type="Rhea" id="RHEA:19669"/>
        <dbReference type="ChEBI" id="CHEBI:15377"/>
        <dbReference type="ChEBI" id="CHEBI:15378"/>
        <dbReference type="ChEBI" id="CHEBI:37565"/>
        <dbReference type="ChEBI" id="CHEBI:43474"/>
        <dbReference type="ChEBI" id="CHEBI:58189"/>
        <dbReference type="EC" id="3.6.5.n1"/>
    </reaction>
</comment>
<comment type="subcellular location">
    <subcellularLocation>
        <location evidence="1">Cell inner membrane</location>
        <topology evidence="1">Peripheral membrane protein</topology>
        <orientation evidence="1">Cytoplasmic side</orientation>
    </subcellularLocation>
</comment>
<comment type="similarity">
    <text evidence="1">Belongs to the TRAFAC class translation factor GTPase superfamily. Classic translation factor GTPase family. LepA subfamily.</text>
</comment>
<keyword id="KW-0997">Cell inner membrane</keyword>
<keyword id="KW-1003">Cell membrane</keyword>
<keyword id="KW-0342">GTP-binding</keyword>
<keyword id="KW-0378">Hydrolase</keyword>
<keyword id="KW-0472">Membrane</keyword>
<keyword id="KW-0547">Nucleotide-binding</keyword>
<keyword id="KW-0648">Protein biosynthesis</keyword>
<proteinExistence type="inferred from homology"/>
<protein>
    <recommendedName>
        <fullName evidence="1">Elongation factor 4</fullName>
        <shortName evidence="1">EF-4</shortName>
        <ecNumber evidence="1">3.6.5.n1</ecNumber>
    </recommendedName>
    <alternativeName>
        <fullName evidence="1">Ribosomal back-translocase LepA</fullName>
    </alternativeName>
</protein>